<dbReference type="EC" id="5.3.1.1" evidence="1"/>
<dbReference type="EMBL" id="U85643">
    <property type="protein sequence ID" value="AAC45131.1"/>
    <property type="molecule type" value="Genomic_DNA"/>
</dbReference>
<dbReference type="EMBL" id="CP000075">
    <property type="protein sequence ID" value="AAY39214.1"/>
    <property type="molecule type" value="Genomic_DNA"/>
</dbReference>
<dbReference type="RefSeq" id="WP_011268882.1">
    <property type="nucleotide sequence ID" value="NC_007005.1"/>
</dbReference>
<dbReference type="RefSeq" id="YP_237252.1">
    <property type="nucleotide sequence ID" value="NC_007005.1"/>
</dbReference>
<dbReference type="SMR" id="P95576"/>
<dbReference type="STRING" id="205918.Psyr_4184"/>
<dbReference type="KEGG" id="psb:Psyr_4184"/>
<dbReference type="PATRIC" id="fig|205918.7.peg.4311"/>
<dbReference type="eggNOG" id="COG0149">
    <property type="taxonomic scope" value="Bacteria"/>
</dbReference>
<dbReference type="HOGENOM" id="CLU_024251_2_1_6"/>
<dbReference type="OrthoDB" id="9809429at2"/>
<dbReference type="UniPathway" id="UPA00109">
    <property type="reaction ID" value="UER00189"/>
</dbReference>
<dbReference type="UniPathway" id="UPA00138"/>
<dbReference type="Proteomes" id="UP000000426">
    <property type="component" value="Chromosome"/>
</dbReference>
<dbReference type="GO" id="GO:0005829">
    <property type="term" value="C:cytosol"/>
    <property type="evidence" value="ECO:0007669"/>
    <property type="project" value="TreeGrafter"/>
</dbReference>
<dbReference type="GO" id="GO:0004807">
    <property type="term" value="F:triose-phosphate isomerase activity"/>
    <property type="evidence" value="ECO:0007669"/>
    <property type="project" value="UniProtKB-UniRule"/>
</dbReference>
<dbReference type="GO" id="GO:0006094">
    <property type="term" value="P:gluconeogenesis"/>
    <property type="evidence" value="ECO:0007669"/>
    <property type="project" value="UniProtKB-UniRule"/>
</dbReference>
<dbReference type="GO" id="GO:0046166">
    <property type="term" value="P:glyceraldehyde-3-phosphate biosynthetic process"/>
    <property type="evidence" value="ECO:0007669"/>
    <property type="project" value="TreeGrafter"/>
</dbReference>
<dbReference type="GO" id="GO:0019563">
    <property type="term" value="P:glycerol catabolic process"/>
    <property type="evidence" value="ECO:0007669"/>
    <property type="project" value="TreeGrafter"/>
</dbReference>
<dbReference type="GO" id="GO:0006096">
    <property type="term" value="P:glycolytic process"/>
    <property type="evidence" value="ECO:0007669"/>
    <property type="project" value="UniProtKB-UniRule"/>
</dbReference>
<dbReference type="CDD" id="cd00311">
    <property type="entry name" value="TIM"/>
    <property type="match status" value="1"/>
</dbReference>
<dbReference type="FunFam" id="3.20.20.70:FF:000016">
    <property type="entry name" value="Triosephosphate isomerase"/>
    <property type="match status" value="1"/>
</dbReference>
<dbReference type="Gene3D" id="3.20.20.70">
    <property type="entry name" value="Aldolase class I"/>
    <property type="match status" value="1"/>
</dbReference>
<dbReference type="HAMAP" id="MF_00147_B">
    <property type="entry name" value="TIM_B"/>
    <property type="match status" value="1"/>
</dbReference>
<dbReference type="InterPro" id="IPR013785">
    <property type="entry name" value="Aldolase_TIM"/>
</dbReference>
<dbReference type="InterPro" id="IPR035990">
    <property type="entry name" value="TIM_sf"/>
</dbReference>
<dbReference type="InterPro" id="IPR022896">
    <property type="entry name" value="TrioseP_Isoase_bac/euk"/>
</dbReference>
<dbReference type="InterPro" id="IPR000652">
    <property type="entry name" value="Triosephosphate_isomerase"/>
</dbReference>
<dbReference type="InterPro" id="IPR020861">
    <property type="entry name" value="Triosephosphate_isomerase_AS"/>
</dbReference>
<dbReference type="NCBIfam" id="TIGR00419">
    <property type="entry name" value="tim"/>
    <property type="match status" value="1"/>
</dbReference>
<dbReference type="PANTHER" id="PTHR21139">
    <property type="entry name" value="TRIOSEPHOSPHATE ISOMERASE"/>
    <property type="match status" value="1"/>
</dbReference>
<dbReference type="PANTHER" id="PTHR21139:SF42">
    <property type="entry name" value="TRIOSEPHOSPHATE ISOMERASE"/>
    <property type="match status" value="1"/>
</dbReference>
<dbReference type="Pfam" id="PF00121">
    <property type="entry name" value="TIM"/>
    <property type="match status" value="1"/>
</dbReference>
<dbReference type="SUPFAM" id="SSF51351">
    <property type="entry name" value="Triosephosphate isomerase (TIM)"/>
    <property type="match status" value="1"/>
</dbReference>
<dbReference type="PROSITE" id="PS00171">
    <property type="entry name" value="TIM_1"/>
    <property type="match status" value="1"/>
</dbReference>
<dbReference type="PROSITE" id="PS51440">
    <property type="entry name" value="TIM_2"/>
    <property type="match status" value="1"/>
</dbReference>
<keyword id="KW-0963">Cytoplasm</keyword>
<keyword id="KW-0312">Gluconeogenesis</keyword>
<keyword id="KW-0324">Glycolysis</keyword>
<keyword id="KW-0413">Isomerase</keyword>
<evidence type="ECO:0000255" key="1">
    <source>
        <dbReference type="HAMAP-Rule" id="MF_00147"/>
    </source>
</evidence>
<feature type="chain" id="PRO_0000090271" description="Triosephosphate isomerase">
    <location>
        <begin position="1"/>
        <end position="251"/>
    </location>
</feature>
<feature type="active site" description="Electrophile" evidence="1">
    <location>
        <position position="95"/>
    </location>
</feature>
<feature type="active site" description="Proton acceptor" evidence="1">
    <location>
        <position position="167"/>
    </location>
</feature>
<feature type="binding site" evidence="1">
    <location>
        <begin position="9"/>
        <end position="11"/>
    </location>
    <ligand>
        <name>substrate</name>
    </ligand>
</feature>
<feature type="binding site" evidence="1">
    <location>
        <position position="173"/>
    </location>
    <ligand>
        <name>substrate</name>
    </ligand>
</feature>
<feature type="binding site" evidence="1">
    <location>
        <position position="212"/>
    </location>
    <ligand>
        <name>substrate</name>
    </ligand>
</feature>
<feature type="binding site" evidence="1">
    <location>
        <begin position="233"/>
        <end position="234"/>
    </location>
    <ligand>
        <name>substrate</name>
    </ligand>
</feature>
<organism>
    <name type="scientific">Pseudomonas syringae pv. syringae (strain B728a)</name>
    <dbReference type="NCBI Taxonomy" id="205918"/>
    <lineage>
        <taxon>Bacteria</taxon>
        <taxon>Pseudomonadati</taxon>
        <taxon>Pseudomonadota</taxon>
        <taxon>Gammaproteobacteria</taxon>
        <taxon>Pseudomonadales</taxon>
        <taxon>Pseudomonadaceae</taxon>
        <taxon>Pseudomonas</taxon>
        <taxon>Pseudomonas syringae</taxon>
    </lineage>
</organism>
<gene>
    <name evidence="1" type="primary">tpiA</name>
    <name type="synonym">tpi</name>
    <name type="ordered locus">Psyr_4184</name>
</gene>
<accession>P95576</accession>
<accession>Q4ZNQ8</accession>
<reference key="1">
    <citation type="journal article" date="1997" name="J. Bacteriol.">
        <title>Multiple loci of Pseudomonas syringae pv. syringae are involved in pathogenicity on bean: restoration of one lesion-deficient mutant requires two tRNA genes.</title>
        <authorList>
            <person name="Rich J.J."/>
            <person name="Willis D.K."/>
        </authorList>
    </citation>
    <scope>NUCLEOTIDE SEQUENCE [GENOMIC DNA]</scope>
</reference>
<reference key="2">
    <citation type="journal article" date="2005" name="Proc. Natl. Acad. Sci. U.S.A.">
        <title>Comparison of the complete genome sequences of Pseudomonas syringae pv. syringae B728a and pv. tomato DC3000.</title>
        <authorList>
            <person name="Feil H."/>
            <person name="Feil W.S."/>
            <person name="Chain P."/>
            <person name="Larimer F."/>
            <person name="Dibartolo G."/>
            <person name="Copeland A."/>
            <person name="Lykidis A."/>
            <person name="Trong S."/>
            <person name="Nolan M."/>
            <person name="Goltsman E."/>
            <person name="Thiel J."/>
            <person name="Malfatti S."/>
            <person name="Loper J.E."/>
            <person name="Lapidus A."/>
            <person name="Detter J.C."/>
            <person name="Land M."/>
            <person name="Richardson P.M."/>
            <person name="Kyrpides N.C."/>
            <person name="Ivanova N."/>
            <person name="Lindow S.E."/>
        </authorList>
    </citation>
    <scope>NUCLEOTIDE SEQUENCE [LARGE SCALE GENOMIC DNA]</scope>
    <source>
        <strain>B728a</strain>
    </source>
</reference>
<sequence>MRRPMVAGNWKMHGTRASVAELIEGLCKQSLPGSVDIAVMPASLFTCQVVDGLKATSIIVGAQDAAIQAEQGALTGEVASSQLADAGCKLVLVGHSERRQLIGEQDDVLNKKFAAIQAKGLTPVLCVGETLEERKAGQTLEVVGRQLDSVIAEFGVNALVNAVIAYEPVWAIGTGLTASPQEAQEVHAAIRAQLAKENAEVAQGVRLLYGGSVKAANAVELFSMPDIDGGLIGGASLNADEFGAICRAAGN</sequence>
<protein>
    <recommendedName>
        <fullName evidence="1">Triosephosphate isomerase</fullName>
        <shortName evidence="1">TIM</shortName>
        <shortName evidence="1">TPI</shortName>
        <ecNumber evidence="1">5.3.1.1</ecNumber>
    </recommendedName>
    <alternativeName>
        <fullName evidence="1">Triose-phosphate isomerase</fullName>
    </alternativeName>
</protein>
<comment type="function">
    <text evidence="1">Involved in the gluconeogenesis. Catalyzes stereospecifically the conversion of dihydroxyacetone phosphate (DHAP) to D-glyceraldehyde-3-phosphate (G3P).</text>
</comment>
<comment type="catalytic activity">
    <reaction evidence="1">
        <text>D-glyceraldehyde 3-phosphate = dihydroxyacetone phosphate</text>
        <dbReference type="Rhea" id="RHEA:18585"/>
        <dbReference type="ChEBI" id="CHEBI:57642"/>
        <dbReference type="ChEBI" id="CHEBI:59776"/>
        <dbReference type="EC" id="5.3.1.1"/>
    </reaction>
</comment>
<comment type="pathway">
    <text evidence="1">Carbohydrate biosynthesis; gluconeogenesis.</text>
</comment>
<comment type="pathway">
    <text evidence="1">Carbohydrate degradation; glycolysis; D-glyceraldehyde 3-phosphate from glycerone phosphate: step 1/1.</text>
</comment>
<comment type="subunit">
    <text evidence="1">Homodimer.</text>
</comment>
<comment type="subcellular location">
    <subcellularLocation>
        <location evidence="1">Cytoplasm</location>
    </subcellularLocation>
</comment>
<comment type="similarity">
    <text evidence="1">Belongs to the triosephosphate isomerase family.</text>
</comment>
<proteinExistence type="inferred from homology"/>
<name>TPIS_PSEU2</name>